<dbReference type="EC" id="3.1.3.70" evidence="1"/>
<dbReference type="EMBL" id="CP000800">
    <property type="protein sequence ID" value="ABV20086.1"/>
    <property type="molecule type" value="Genomic_DNA"/>
</dbReference>
<dbReference type="RefSeq" id="WP_000491501.1">
    <property type="nucleotide sequence ID" value="NC_009801.1"/>
</dbReference>
<dbReference type="SMR" id="A7ZN77"/>
<dbReference type="KEGG" id="ecw:EcE24377A_2188"/>
<dbReference type="HOGENOM" id="CLU_063016_1_0_6"/>
<dbReference type="Proteomes" id="UP000001122">
    <property type="component" value="Chromosome"/>
</dbReference>
<dbReference type="GO" id="GO:0005829">
    <property type="term" value="C:cytosol"/>
    <property type="evidence" value="ECO:0007669"/>
    <property type="project" value="TreeGrafter"/>
</dbReference>
<dbReference type="GO" id="GO:0000287">
    <property type="term" value="F:magnesium ion binding"/>
    <property type="evidence" value="ECO:0007669"/>
    <property type="project" value="TreeGrafter"/>
</dbReference>
<dbReference type="GO" id="GO:0050531">
    <property type="term" value="F:mannosyl-3-phosphoglycerate phosphatase activity"/>
    <property type="evidence" value="ECO:0007669"/>
    <property type="project" value="UniProtKB-UniRule"/>
</dbReference>
<dbReference type="GO" id="GO:0051479">
    <property type="term" value="P:mannosylglycerate biosynthetic process"/>
    <property type="evidence" value="ECO:0007669"/>
    <property type="project" value="InterPro"/>
</dbReference>
<dbReference type="CDD" id="cd07507">
    <property type="entry name" value="HAD_Pase"/>
    <property type="match status" value="1"/>
</dbReference>
<dbReference type="Gene3D" id="3.40.50.1000">
    <property type="entry name" value="HAD superfamily/HAD-like"/>
    <property type="match status" value="1"/>
</dbReference>
<dbReference type="Gene3D" id="3.30.980.20">
    <property type="entry name" value="Putative mannosyl-3-phosphoglycerate phosphatase, domain 2"/>
    <property type="match status" value="1"/>
</dbReference>
<dbReference type="HAMAP" id="MF_00617">
    <property type="entry name" value="MPGP_rel"/>
    <property type="match status" value="1"/>
</dbReference>
<dbReference type="InterPro" id="IPR036412">
    <property type="entry name" value="HAD-like_sf"/>
</dbReference>
<dbReference type="InterPro" id="IPR006381">
    <property type="entry name" value="HAD-SF-IIB-MPGP"/>
</dbReference>
<dbReference type="InterPro" id="IPR006379">
    <property type="entry name" value="HAD-SF_hydro_IIB"/>
</dbReference>
<dbReference type="InterPro" id="IPR023214">
    <property type="entry name" value="HAD_sf"/>
</dbReference>
<dbReference type="InterPro" id="IPR012815">
    <property type="entry name" value="MPG_Pase"/>
</dbReference>
<dbReference type="NCBIfam" id="TIGR01484">
    <property type="entry name" value="HAD-SF-IIB"/>
    <property type="match status" value="1"/>
</dbReference>
<dbReference type="NCBIfam" id="TIGR01486">
    <property type="entry name" value="HAD-SF-IIB-MPGP"/>
    <property type="match status" value="1"/>
</dbReference>
<dbReference type="NCBIfam" id="TIGR02463">
    <property type="entry name" value="MPGP_rel"/>
    <property type="match status" value="1"/>
</dbReference>
<dbReference type="NCBIfam" id="NF002976">
    <property type="entry name" value="PRK03669.1"/>
    <property type="match status" value="1"/>
</dbReference>
<dbReference type="PANTHER" id="PTHR10000:SF8">
    <property type="entry name" value="HAD SUPERFAMILY HYDROLASE-LIKE, TYPE 3"/>
    <property type="match status" value="1"/>
</dbReference>
<dbReference type="PANTHER" id="PTHR10000">
    <property type="entry name" value="PHOSPHOSERINE PHOSPHATASE"/>
    <property type="match status" value="1"/>
</dbReference>
<dbReference type="Pfam" id="PF08282">
    <property type="entry name" value="Hydrolase_3"/>
    <property type="match status" value="1"/>
</dbReference>
<dbReference type="SFLD" id="SFLDG01142">
    <property type="entry name" value="C2.B.2:_Mannosyl-3-phosphoglyc"/>
    <property type="match status" value="1"/>
</dbReference>
<dbReference type="SFLD" id="SFLDS00003">
    <property type="entry name" value="Haloacid_Dehalogenase"/>
    <property type="match status" value="1"/>
</dbReference>
<dbReference type="SUPFAM" id="SSF56784">
    <property type="entry name" value="HAD-like"/>
    <property type="match status" value="1"/>
</dbReference>
<organism>
    <name type="scientific">Escherichia coli O139:H28 (strain E24377A / ETEC)</name>
    <dbReference type="NCBI Taxonomy" id="331111"/>
    <lineage>
        <taxon>Bacteria</taxon>
        <taxon>Pseudomonadati</taxon>
        <taxon>Pseudomonadota</taxon>
        <taxon>Gammaproteobacteria</taxon>
        <taxon>Enterobacterales</taxon>
        <taxon>Enterobacteriaceae</taxon>
        <taxon>Escherichia</taxon>
    </lineage>
</organism>
<reference key="1">
    <citation type="journal article" date="2008" name="J. Bacteriol.">
        <title>The pangenome structure of Escherichia coli: comparative genomic analysis of E. coli commensal and pathogenic isolates.</title>
        <authorList>
            <person name="Rasko D.A."/>
            <person name="Rosovitz M.J."/>
            <person name="Myers G.S.A."/>
            <person name="Mongodin E.F."/>
            <person name="Fricke W.F."/>
            <person name="Gajer P."/>
            <person name="Crabtree J."/>
            <person name="Sebaihia M."/>
            <person name="Thomson N.R."/>
            <person name="Chaudhuri R."/>
            <person name="Henderson I.R."/>
            <person name="Sperandio V."/>
            <person name="Ravel J."/>
        </authorList>
    </citation>
    <scope>NUCLEOTIDE SEQUENCE [LARGE SCALE GENOMIC DNA]</scope>
    <source>
        <strain>E24377A / ETEC</strain>
    </source>
</reference>
<sequence>MFSIQQPLLVFSDLDGTLLDSHSYDWQPAAPWLSRLREANVPVILCSSKTSAEMLYLQKTLGLQGLPLIAENGAVIQLAEQWQDIDGFPRIISGISHGEISQVLNTLREKEHFKFTTFDDVDDATIAEWTGLSRSQAALTQLHEASVTLIWRDSDERMAQFTARLNELGLQFMQGARFWHVLDASAGKDQAANWIIATYQQLSGKRPTTLGLGDGPNDAPLLEVMDYAVIVKGLNREGVHLHDEDPTRVWRTQREGPEGWREGLDHFFSAR</sequence>
<gene>
    <name type="ordered locus">EcE24377A_2188</name>
</gene>
<name>MPGP_ECO24</name>
<accession>A7ZN77</accession>
<protein>
    <recommendedName>
        <fullName evidence="1">Mannosyl-3-phosphoglycerate phosphatase</fullName>
        <shortName evidence="1">MPGP</shortName>
        <ecNumber evidence="1">3.1.3.70</ecNumber>
    </recommendedName>
</protein>
<evidence type="ECO:0000255" key="1">
    <source>
        <dbReference type="HAMAP-Rule" id="MF_00617"/>
    </source>
</evidence>
<feature type="chain" id="PRO_1000061372" description="Mannosyl-3-phosphoglycerate phosphatase">
    <location>
        <begin position="1"/>
        <end position="271"/>
    </location>
</feature>
<feature type="active site" description="Nucleophile" evidence="1">
    <location>
        <position position="13"/>
    </location>
</feature>
<feature type="binding site" evidence="1">
    <location>
        <position position="13"/>
    </location>
    <ligand>
        <name>Mg(2+)</name>
        <dbReference type="ChEBI" id="CHEBI:18420"/>
    </ligand>
</feature>
<feature type="binding site" evidence="1">
    <location>
        <position position="15"/>
    </location>
    <ligand>
        <name>Mg(2+)</name>
        <dbReference type="ChEBI" id="CHEBI:18420"/>
    </ligand>
</feature>
<feature type="binding site" evidence="1">
    <location>
        <position position="214"/>
    </location>
    <ligand>
        <name>Mg(2+)</name>
        <dbReference type="ChEBI" id="CHEBI:18420"/>
    </ligand>
</feature>
<proteinExistence type="inferred from homology"/>
<comment type="catalytic activity">
    <reaction evidence="1">
        <text>2-O-(alpha-D-mannosyl)-3-phosphoglycerate + H2O = (2R)-2-O-(alpha-D-mannosyl)-glycerate + phosphate</text>
        <dbReference type="Rhea" id="RHEA:19309"/>
        <dbReference type="ChEBI" id="CHEBI:15377"/>
        <dbReference type="ChEBI" id="CHEBI:43474"/>
        <dbReference type="ChEBI" id="CHEBI:57541"/>
        <dbReference type="ChEBI" id="CHEBI:57744"/>
        <dbReference type="EC" id="3.1.3.70"/>
    </reaction>
</comment>
<comment type="cofactor">
    <cofactor evidence="1">
        <name>Mg(2+)</name>
        <dbReference type="ChEBI" id="CHEBI:18420"/>
    </cofactor>
</comment>
<comment type="subcellular location">
    <subcellularLocation>
        <location evidence="1">Cytoplasm</location>
    </subcellularLocation>
</comment>
<comment type="similarity">
    <text evidence="1">Belongs to the HAD-like hydrolase superfamily. MPGP family.</text>
</comment>
<keyword id="KW-0963">Cytoplasm</keyword>
<keyword id="KW-0378">Hydrolase</keyword>
<keyword id="KW-0460">Magnesium</keyword>
<keyword id="KW-0479">Metal-binding</keyword>
<keyword id="KW-1185">Reference proteome</keyword>